<sequence length="223" mass="24598">MKTIQIAIDGPASSGKSTVAKIIAKDFGFTYLDTGAMYRAATYMALKNQLGVEEVEALLALLDQHPISFGRSETGDQLVFVGDVDITHPIRENEVTNHVSAIAAIPEVREKLVSLQQEIAQQGGIVMDGRDIGTVVLPQAELKIFLVASVDERAERRYKENIAKGIETDLETLKKEIAARDYKDSHRETSPLKQAEDAVYLDTTGLNIQEVVEKIKAEAEKRM</sequence>
<organism>
    <name type="scientific">Streptococcus pneumoniae (strain P1031)</name>
    <dbReference type="NCBI Taxonomy" id="488223"/>
    <lineage>
        <taxon>Bacteria</taxon>
        <taxon>Bacillati</taxon>
        <taxon>Bacillota</taxon>
        <taxon>Bacilli</taxon>
        <taxon>Lactobacillales</taxon>
        <taxon>Streptococcaceae</taxon>
        <taxon>Streptococcus</taxon>
    </lineage>
</organism>
<accession>C1CLU8</accession>
<comment type="catalytic activity">
    <reaction evidence="1">
        <text>CMP + ATP = CDP + ADP</text>
        <dbReference type="Rhea" id="RHEA:11600"/>
        <dbReference type="ChEBI" id="CHEBI:30616"/>
        <dbReference type="ChEBI" id="CHEBI:58069"/>
        <dbReference type="ChEBI" id="CHEBI:60377"/>
        <dbReference type="ChEBI" id="CHEBI:456216"/>
        <dbReference type="EC" id="2.7.4.25"/>
    </reaction>
</comment>
<comment type="catalytic activity">
    <reaction evidence="1">
        <text>dCMP + ATP = dCDP + ADP</text>
        <dbReference type="Rhea" id="RHEA:25094"/>
        <dbReference type="ChEBI" id="CHEBI:30616"/>
        <dbReference type="ChEBI" id="CHEBI:57566"/>
        <dbReference type="ChEBI" id="CHEBI:58593"/>
        <dbReference type="ChEBI" id="CHEBI:456216"/>
        <dbReference type="EC" id="2.7.4.25"/>
    </reaction>
</comment>
<comment type="subcellular location">
    <subcellularLocation>
        <location evidence="1">Cytoplasm</location>
    </subcellularLocation>
</comment>
<comment type="similarity">
    <text evidence="1">Belongs to the cytidylate kinase family. Type 1 subfamily.</text>
</comment>
<feature type="chain" id="PRO_1000125305" description="Cytidylate kinase">
    <location>
        <begin position="1"/>
        <end position="223"/>
    </location>
</feature>
<feature type="binding site" evidence="1">
    <location>
        <begin position="10"/>
        <end position="18"/>
    </location>
    <ligand>
        <name>ATP</name>
        <dbReference type="ChEBI" id="CHEBI:30616"/>
    </ligand>
</feature>
<evidence type="ECO:0000255" key="1">
    <source>
        <dbReference type="HAMAP-Rule" id="MF_00238"/>
    </source>
</evidence>
<gene>
    <name evidence="1" type="primary">cmk</name>
    <name type="ordered locus">SPP_1624</name>
</gene>
<dbReference type="EC" id="2.7.4.25" evidence="1"/>
<dbReference type="EMBL" id="CP000920">
    <property type="protein sequence ID" value="ACO22161.1"/>
    <property type="molecule type" value="Genomic_DNA"/>
</dbReference>
<dbReference type="RefSeq" id="WP_000849378.1">
    <property type="nucleotide sequence ID" value="NC_012467.1"/>
</dbReference>
<dbReference type="SMR" id="C1CLU8"/>
<dbReference type="GeneID" id="45653168"/>
<dbReference type="KEGG" id="spp:SPP_1624"/>
<dbReference type="HOGENOM" id="CLU_079959_0_2_9"/>
<dbReference type="GO" id="GO:0005829">
    <property type="term" value="C:cytosol"/>
    <property type="evidence" value="ECO:0007669"/>
    <property type="project" value="TreeGrafter"/>
</dbReference>
<dbReference type="GO" id="GO:0005524">
    <property type="term" value="F:ATP binding"/>
    <property type="evidence" value="ECO:0007669"/>
    <property type="project" value="UniProtKB-UniRule"/>
</dbReference>
<dbReference type="GO" id="GO:0036430">
    <property type="term" value="F:CMP kinase activity"/>
    <property type="evidence" value="ECO:0007669"/>
    <property type="project" value="RHEA"/>
</dbReference>
<dbReference type="GO" id="GO:0036431">
    <property type="term" value="F:dCMP kinase activity"/>
    <property type="evidence" value="ECO:0007669"/>
    <property type="project" value="RHEA"/>
</dbReference>
<dbReference type="GO" id="GO:0015949">
    <property type="term" value="P:nucleobase-containing small molecule interconversion"/>
    <property type="evidence" value="ECO:0007669"/>
    <property type="project" value="TreeGrafter"/>
</dbReference>
<dbReference type="GO" id="GO:0006220">
    <property type="term" value="P:pyrimidine nucleotide metabolic process"/>
    <property type="evidence" value="ECO:0007669"/>
    <property type="project" value="UniProtKB-UniRule"/>
</dbReference>
<dbReference type="CDD" id="cd02020">
    <property type="entry name" value="CMPK"/>
    <property type="match status" value="1"/>
</dbReference>
<dbReference type="FunFam" id="3.40.50.300:FF:000484">
    <property type="entry name" value="Cytidylate kinase"/>
    <property type="match status" value="1"/>
</dbReference>
<dbReference type="Gene3D" id="3.40.50.300">
    <property type="entry name" value="P-loop containing nucleotide triphosphate hydrolases"/>
    <property type="match status" value="1"/>
</dbReference>
<dbReference type="HAMAP" id="MF_00238">
    <property type="entry name" value="Cytidyl_kinase_type1"/>
    <property type="match status" value="1"/>
</dbReference>
<dbReference type="InterPro" id="IPR003136">
    <property type="entry name" value="Cytidylate_kin"/>
</dbReference>
<dbReference type="InterPro" id="IPR011994">
    <property type="entry name" value="Cytidylate_kinase_dom"/>
</dbReference>
<dbReference type="InterPro" id="IPR027417">
    <property type="entry name" value="P-loop_NTPase"/>
</dbReference>
<dbReference type="NCBIfam" id="TIGR00017">
    <property type="entry name" value="cmk"/>
    <property type="match status" value="1"/>
</dbReference>
<dbReference type="PANTHER" id="PTHR21299:SF2">
    <property type="entry name" value="CYTIDYLATE KINASE"/>
    <property type="match status" value="1"/>
</dbReference>
<dbReference type="PANTHER" id="PTHR21299">
    <property type="entry name" value="CYTIDYLATE KINASE/PANTOATE-BETA-ALANINE LIGASE"/>
    <property type="match status" value="1"/>
</dbReference>
<dbReference type="Pfam" id="PF02224">
    <property type="entry name" value="Cytidylate_kin"/>
    <property type="match status" value="1"/>
</dbReference>
<dbReference type="SUPFAM" id="SSF52540">
    <property type="entry name" value="P-loop containing nucleoside triphosphate hydrolases"/>
    <property type="match status" value="1"/>
</dbReference>
<keyword id="KW-0067">ATP-binding</keyword>
<keyword id="KW-0963">Cytoplasm</keyword>
<keyword id="KW-0418">Kinase</keyword>
<keyword id="KW-0547">Nucleotide-binding</keyword>
<keyword id="KW-0808">Transferase</keyword>
<proteinExistence type="inferred from homology"/>
<name>KCY_STRZP</name>
<protein>
    <recommendedName>
        <fullName evidence="1">Cytidylate kinase</fullName>
        <shortName evidence="1">CK</shortName>
        <ecNumber evidence="1">2.7.4.25</ecNumber>
    </recommendedName>
    <alternativeName>
        <fullName evidence="1">Cytidine monophosphate kinase</fullName>
        <shortName evidence="1">CMP kinase</shortName>
    </alternativeName>
</protein>
<reference key="1">
    <citation type="journal article" date="2010" name="Genome Biol.">
        <title>Structure and dynamics of the pan-genome of Streptococcus pneumoniae and closely related species.</title>
        <authorList>
            <person name="Donati C."/>
            <person name="Hiller N.L."/>
            <person name="Tettelin H."/>
            <person name="Muzzi A."/>
            <person name="Croucher N.J."/>
            <person name="Angiuoli S.V."/>
            <person name="Oggioni M."/>
            <person name="Dunning Hotopp J.C."/>
            <person name="Hu F.Z."/>
            <person name="Riley D.R."/>
            <person name="Covacci A."/>
            <person name="Mitchell T.J."/>
            <person name="Bentley S.D."/>
            <person name="Kilian M."/>
            <person name="Ehrlich G.D."/>
            <person name="Rappuoli R."/>
            <person name="Moxon E.R."/>
            <person name="Masignani V."/>
        </authorList>
    </citation>
    <scope>NUCLEOTIDE SEQUENCE [LARGE SCALE GENOMIC DNA]</scope>
    <source>
        <strain>P1031</strain>
    </source>
</reference>